<sequence>MSNSLSLTFTALNNPQINAISNPNARLRPLARVTRCSATCVERKRWLGTKLRSGGGLERIQLWESGGLGRLPKLRVAVKSSFSAVPDKPMGLYDPAFDKDSCGVGFVAELNGQSSRKTVTDALEMLVRMTHRGACGCEANTGDGAGILVALPHGFYQEVVDFQLPPQGNYAVGMFFLPKSDSRRKESKNIFTKVAESLGHKVLGWRSVPTDNTGLGKSAQLTEPVIEQVFLTPSSDSKVDLEKQMYILRKLSMVSITSALNLQSDGITDFYICSLSSRTVIYKGQLTPAQLGEYYYADLGNERFTSYMALIHSRFSTNTFPSWDRAQPFRVLGHNGEINTLRGNVNWIKAREGLLKCKELGLSENDLKKFLPIVDANSSDSGCFDGVLEFLLHSGKSLPEAVMMMIPEAWQNDKNMDPQRKAFYEYYSALMEPWDGPALISFTDGHYLGATLDRNGLRPGRFYVTHSGRVIMASEVGVVDIPPEDVCRKGRLNPGMMLLVDFEKQIVVNDDALKEQYSLARPYGDWLEKQKIELKDIIDSVHESDIVPPTISGVPPLSNDDVDMENMGIQGLLAPLKAFGYSVESLEILLLPMAKDGVEALGSMGNDTPLAVMSNREKLTFEYFKQMFAQVTNPPIDPIREKIVTSMRCMVGPEGDLTETTEEQCHRLSLKGPLLSTKEMEAIKKMNYRGWRSKVIDITYSKERGTKGLEEALDRICTEAHNAISEGYTTLVLSDRAFSKKHVAVSSLLAVGAVHQHLVKTLERTRVALMVESAEPREVHHFCTLVGFGADAICPYLAIEAIWRLQVDGKIPPKASGDFNSKDELVKKYFKASTYGMMKVLAKMGISTLASYKGAQIFEALGLSSEVIEKCFAGTPSRVEGATFEMLAQDALHLHELAFPSRIFSPGSAEAVALPNPGDYHWRKGGEVHLNDPLAIAKLQEAARTNSVDAYKQYSKTIHELNKACNLRGLLKFKDAASKVPISEVEPASEIVKRFCTGAMSYGSISLEAHTALATAMNTIGGKSNTGEGGEQPSRMEPLADGSRNPKRSAIKQVASGRFGVSSYYLTNADELQIKMAQGAKPGEGGELPGHKVIGDIAITRNSTAGVGLISPPPHHDIYSIEDLAQLIHDLKNANPAARISVKLVSEAGVGVIASGVVKGHAEHVLISGHDGGTGASRWTGIKSAGLPWELGLAETHQTLVANDLRGRTTLQTDGQLKTGRDVAIAALLGAEEYGFSTAPLITLGCIMMRKCHKNTCPVGIATQDPVLREKFAGEPEHVINFFFMVAEEMREIMSQLGFRTVNEMVGRSDMLEVDKEVVKGNAKLENIDLSLLLRPAAELRPEAAQYCVQKQDHGLDMALDNKLISLSNAALEKGLPVYIETPICNTNRAVGTMLSHEVTKRYNLAGLPADTIHIQFTGSAGQSFGAFLCPGITLELEGDSNDYIGKGLSGGKVVVYPPKGSNFDPKDNILIGNVALYGATRGEAYFNGMAAERFCVRNSGALAVVEGVGDHGCEYMTGGTVVVLGKTGRNFAAGMSGGIAYVLDVDGTFQSRCNLELVDLDKVEEEEDIITLRMLIQQHQRHTNSLLAKEVLVDFENLLPKFVKVFPREYKRVLASMKSDAASKDAVERAAEDVDEQDDEAQAVEKDAFEELKKLATASLNEKPSEAPKRPSQVTDAVKHRGFVAYEREGVQYRDPNVRLNDWNEVMMETKPGPLLKTQSARCMDCGTPFCHQENSGCPLGNKIPEFNELVYQNRWQEALERLLETNNFPEFTGRVCPAPCEGSCVLGIIENPVSIKNIECAIIDKAFEEGWMIPRPPVKRTGKRVAIVGSGPSGLAAADQLNKMGHIVTVFERADRIGGLMMYGVPNMKTDKVDIVQRRVNLMAEEGINFVVNANIGLDPLYSLERLREENDAIVLAVGATKPRDLPVPGRELSGVHFAMEFLHANTKSLLDSNLQDGNYISAKGKKVVVIGGGDTGTDCIGTSIRHGCTAVVNLELLPQPPPTRAPGNPWPQWPRIFRVDYGHQEAETKFGKDPRTYEVLTKRFVGDENGVVKGLEVVRVCWEKDETGKFQFKEIEGSEEIIEADLVLLAMGFLGPEATIAEKLGVERDNRSNFKADYGRFSTSVDGVFAAGDCRRGQSLVVWAISEGRQAAAQVDSYLTNEDHGIDGNQDEFVKRQQDLNKKHSKHTVMT</sequence>
<protein>
    <recommendedName>
        <fullName>Glutamate synthase [NADH], amyloplastic</fullName>
        <ecNumber>1.4.1.14</ecNumber>
    </recommendedName>
    <alternativeName>
        <fullName>NADH-GOGAT</fullName>
    </alternativeName>
</protein>
<evidence type="ECO:0000250" key="1"/>
<evidence type="ECO:0000255" key="2"/>
<evidence type="ECO:0000255" key="3">
    <source>
        <dbReference type="PROSITE-ProRule" id="PRU00609"/>
    </source>
</evidence>
<evidence type="ECO:0000256" key="4">
    <source>
        <dbReference type="SAM" id="MobiDB-lite"/>
    </source>
</evidence>
<evidence type="ECO:0000269" key="5">
    <source>
    </source>
</evidence>
<evidence type="ECO:0000269" key="6">
    <source>
    </source>
</evidence>
<evidence type="ECO:0000269" key="7">
    <source>
    </source>
</evidence>
<evidence type="ECO:0000269" key="8">
    <source>
    </source>
</evidence>
<evidence type="ECO:0000269" key="9">
    <source>
    </source>
</evidence>
<evidence type="ECO:0000305" key="10"/>
<feature type="transit peptide" description="Amyloplast" evidence="9">
    <location>
        <begin position="1"/>
        <end position="101"/>
    </location>
</feature>
<feature type="chain" id="PRO_0000011617" description="Glutamate synthase [NADH], amyloplastic">
    <location>
        <begin position="102"/>
        <end position="2194"/>
    </location>
</feature>
<feature type="domain" description="Glutamine amidotransferase type-2" evidence="3">
    <location>
        <begin position="102"/>
        <end position="503"/>
    </location>
</feature>
<feature type="region of interest" description="Disordered" evidence="4">
    <location>
        <begin position="1021"/>
        <end position="1045"/>
    </location>
</feature>
<feature type="active site" description="Nucleophile" evidence="3">
    <location>
        <position position="102"/>
    </location>
</feature>
<feature type="binding site" evidence="1">
    <location>
        <begin position="1193"/>
        <end position="1250"/>
    </location>
    <ligand>
        <name>FMN</name>
        <dbReference type="ChEBI" id="CHEBI:58210"/>
    </ligand>
</feature>
<feature type="binding site" evidence="1">
    <location>
        <position position="1246"/>
    </location>
    <ligand>
        <name>[3Fe-4S] cluster</name>
        <dbReference type="ChEBI" id="CHEBI:21137"/>
    </ligand>
</feature>
<feature type="binding site" evidence="1">
    <location>
        <position position="1252"/>
    </location>
    <ligand>
        <name>[3Fe-4S] cluster</name>
        <dbReference type="ChEBI" id="CHEBI:21137"/>
    </ligand>
</feature>
<feature type="binding site" evidence="1">
    <location>
        <position position="1257"/>
    </location>
    <ligand>
        <name>[3Fe-4S] cluster</name>
        <dbReference type="ChEBI" id="CHEBI:21137"/>
    </ligand>
</feature>
<feature type="binding site" evidence="2">
    <location>
        <begin position="1974"/>
        <end position="1988"/>
    </location>
    <ligand>
        <name>NAD(+)</name>
        <dbReference type="ChEBI" id="CHEBI:57540"/>
    </ligand>
</feature>
<feature type="sequence conflict" description="In Ref. 2; AAB41904." evidence="10" ref="2">
    <original>V</original>
    <variation>F</variation>
    <location>
        <position position="33"/>
    </location>
</feature>
<feature type="sequence conflict" description="In Ref. 2; AAB41904." evidence="10" ref="2">
    <original>L</original>
    <variation>P</variation>
    <location>
        <position position="57"/>
    </location>
</feature>
<feature type="sequence conflict" description="In Ref. 2; AAB41904." evidence="10" ref="2">
    <original>K</original>
    <variation>M</variation>
    <location>
        <position position="185"/>
    </location>
</feature>
<feature type="sequence conflict" description="In Ref. 2; AAB41904." evidence="10" ref="2">
    <original>H</original>
    <variation>R</variation>
    <location>
        <position position="742"/>
    </location>
</feature>
<feature type="sequence conflict" description="In Ref. 2; AAB41904." evidence="10" ref="2">
    <original>S</original>
    <variation>G</variation>
    <location>
        <position position="989"/>
    </location>
</feature>
<feature type="sequence conflict" description="In Ref. 2; AAB41904." evidence="10" ref="2">
    <original>L</original>
    <variation>Q</variation>
    <location>
        <position position="1503"/>
    </location>
</feature>
<feature type="sequence conflict" description="In Ref. 2; AAB41904." evidence="10" ref="2">
    <original>A</original>
    <variation>R</variation>
    <location>
        <position position="2154"/>
    </location>
</feature>
<organism>
    <name type="scientific">Medicago sativa</name>
    <name type="common">Alfalfa</name>
    <dbReference type="NCBI Taxonomy" id="3879"/>
    <lineage>
        <taxon>Eukaryota</taxon>
        <taxon>Viridiplantae</taxon>
        <taxon>Streptophyta</taxon>
        <taxon>Embryophyta</taxon>
        <taxon>Tracheophyta</taxon>
        <taxon>Spermatophyta</taxon>
        <taxon>Magnoliopsida</taxon>
        <taxon>eudicotyledons</taxon>
        <taxon>Gunneridae</taxon>
        <taxon>Pentapetalae</taxon>
        <taxon>rosids</taxon>
        <taxon>fabids</taxon>
        <taxon>Fabales</taxon>
        <taxon>Fabaceae</taxon>
        <taxon>Papilionoideae</taxon>
        <taxon>50 kb inversion clade</taxon>
        <taxon>NPAAA clade</taxon>
        <taxon>Hologalegina</taxon>
        <taxon>IRL clade</taxon>
        <taxon>Trifolieae</taxon>
        <taxon>Medicago</taxon>
    </lineage>
</organism>
<keyword id="KW-0003">3Fe-4S</keyword>
<keyword id="KW-0028">Amino-acid biosynthesis</keyword>
<keyword id="KW-0035">Amyloplast</keyword>
<keyword id="KW-0903">Direct protein sequencing</keyword>
<keyword id="KW-0274">FAD</keyword>
<keyword id="KW-0285">Flavoprotein</keyword>
<keyword id="KW-0288">FMN</keyword>
<keyword id="KW-0314">Glutamate biosynthesis</keyword>
<keyword id="KW-0315">Glutamine amidotransferase</keyword>
<keyword id="KW-0408">Iron</keyword>
<keyword id="KW-0411">Iron-sulfur</keyword>
<keyword id="KW-0479">Metal-binding</keyword>
<keyword id="KW-0520">NAD</keyword>
<keyword id="KW-0560">Oxidoreductase</keyword>
<keyword id="KW-0934">Plastid</keyword>
<keyword id="KW-0809">Transit peptide</keyword>
<accession>Q03460</accession>
<accession>Q40360</accession>
<name>GLSN_MEDSA</name>
<reference key="1">
    <citation type="journal article" date="1993" name="Plant Cell">
        <title>Molecular characterization of NADH-dependent glutamate synthase from alfalfa nodules.</title>
        <authorList>
            <person name="Gregerson R.G."/>
            <person name="Miller S.S."/>
            <person name="Twary S.N."/>
            <person name="Gantt J.S."/>
            <person name="Vance C.P."/>
        </authorList>
    </citation>
    <scope>NUCLEOTIDE SEQUENCE [MRNA]</scope>
    <scope>PROTEIN SEQUENCE OF 102-114</scope>
    <scope>FUNCTION</scope>
    <scope>TISSUE SPECIFICITY</scope>
    <scope>INDUCTION</scope>
    <source>
        <strain>cv. Saranac</strain>
    </source>
</reference>
<reference key="2">
    <citation type="journal article" date="1995" name="Plant J.">
        <title>Alfalfa NADH-dependent glutamate synthase: structure of the gene and importance in symbiotic N2 fixation.</title>
        <authorList>
            <person name="Vance C.P."/>
            <person name="Miller S.S."/>
            <person name="Gregerson R.G."/>
            <person name="Samac D.A."/>
            <person name="Robinson D.L."/>
            <person name="Gantt J.S."/>
        </authorList>
    </citation>
    <scope>NUCLEOTIDE SEQUENCE [GENOMIC DNA]</scope>
    <scope>TISSUE SPECIFICITY</scope>
    <source>
        <strain>cv. Saranac</strain>
        <tissue>Seedling</tissue>
    </source>
</reference>
<reference key="3">
    <citation type="journal article" date="1989" name="Plant Physiol.">
        <title>Purification and characterization of NADH-glutamate synthase from alfalfa root nodules.</title>
        <authorList>
            <person name="Anderson M.P."/>
            <person name="Vance C.P."/>
            <person name="Heichel G.H."/>
            <person name="Miller S.S."/>
        </authorList>
    </citation>
    <scope>FUNCTION</scope>
    <scope>SUBUNIT</scope>
    <scope>CATALYTIC ACTIVITY</scope>
    <scope>BIOPHYSICOCHEMICAL PROPERTIES</scope>
    <scope>ACTIVITY REGULATION</scope>
    <source>
        <strain>cv. Saranac</strain>
    </source>
</reference>
<reference key="4">
    <citation type="journal article" date="1999" name="Plant Physiol.">
        <title>NADH-glutamate synthase in alfalfa root nodules. Genetic regulation and cellular expression.</title>
        <authorList>
            <person name="Trepp G.B."/>
            <person name="van de Mortel M."/>
            <person name="Yoshioka H."/>
            <person name="Miller S.S."/>
            <person name="Samac D.A."/>
            <person name="Gantt J.S."/>
            <person name="Vance C.P."/>
        </authorList>
    </citation>
    <scope>TISSUE SPECIFICITY</scope>
    <source>
        <strain>cv. Saranac</strain>
    </source>
</reference>
<reference key="5">
    <citation type="journal article" date="1999" name="Plant Physiol.">
        <title>NADH-Glutamate synthase in alfalfa root nodules. Immunocytochemical localization.</title>
        <authorList>
            <person name="Trepp G.B."/>
            <person name="Plank D.W."/>
            <person name="Stephen Gantt J."/>
            <person name="Vance C.P."/>
        </authorList>
    </citation>
    <scope>TISSUE SPECIFICITY</scope>
    <scope>SUBCELLULAR LOCATION</scope>
    <source>
        <strain>cv. Saranac</strain>
    </source>
</reference>
<proteinExistence type="evidence at protein level"/>
<comment type="function">
    <text evidence="7 9">Required for the assimilation of symbiotically fixed nitrogen into amino acids in root nodules.</text>
</comment>
<comment type="catalytic activity">
    <reaction evidence="7">
        <text>2 L-glutamate + NAD(+) = L-glutamine + 2-oxoglutarate + NADH + H(+)</text>
        <dbReference type="Rhea" id="RHEA:13753"/>
        <dbReference type="ChEBI" id="CHEBI:15378"/>
        <dbReference type="ChEBI" id="CHEBI:16810"/>
        <dbReference type="ChEBI" id="CHEBI:29985"/>
        <dbReference type="ChEBI" id="CHEBI:57540"/>
        <dbReference type="ChEBI" id="CHEBI:57945"/>
        <dbReference type="ChEBI" id="CHEBI:58359"/>
        <dbReference type="EC" id="1.4.1.14"/>
    </reaction>
</comment>
<comment type="cofactor">
    <cofactor>
        <name>[3Fe-4S] cluster</name>
        <dbReference type="ChEBI" id="CHEBI:21137"/>
    </cofactor>
    <text>Binds 1 [3Fe-4S] cluster.</text>
</comment>
<comment type="cofactor">
    <cofactor>
        <name>FAD</name>
        <dbReference type="ChEBI" id="CHEBI:57692"/>
    </cofactor>
</comment>
<comment type="cofactor">
    <cofactor>
        <name>FMN</name>
        <dbReference type="ChEBI" id="CHEBI:58210"/>
    </cofactor>
</comment>
<comment type="activity regulation">
    <text evidence="7">Inhibited by malate, citrate, glutamate, NAD(+) and azaserine, but not by 2-2' dipyridil and N-ethylmaleimide.</text>
</comment>
<comment type="biophysicochemical properties">
    <kinetics>
        <KM evidence="7">466 uM for glutamine</KM>
        <KM evidence="7">33 uM for 2-oxoglutarate</KM>
        <KM evidence="7">4.2 uM for NADH</KM>
    </kinetics>
    <phDependence>
        <text evidence="7">Optimum pH is 7.5-8.5.</text>
    </phDependence>
</comment>
<comment type="pathway">
    <text>Amino-acid biosynthesis; L-glutamate biosynthesis via GLT pathway; L-glutamate from 2-oxoglutarate and L-glutamine (NAD(+) route): step 1/1.</text>
</comment>
<comment type="pathway">
    <text>Energy metabolism; nitrogen metabolism.</text>
</comment>
<comment type="subunit">
    <text evidence="7">Monomer.</text>
</comment>
<comment type="subcellular location">
    <subcellularLocation>
        <location evidence="6">Plastid</location>
        <location evidence="6">Amyloplast</location>
    </subcellularLocation>
</comment>
<comment type="tissue specificity">
    <text evidence="5 6 8 9">Expressed in infected cells in root nodules. Barely detected in roots and stems.</text>
</comment>
<comment type="induction">
    <text evidence="9">Up-regulated during nodule development.</text>
</comment>
<comment type="similarity">
    <text evidence="10">Belongs to the glutamate synthase family.</text>
</comment>
<dbReference type="EC" id="1.4.1.14"/>
<dbReference type="EMBL" id="L01660">
    <property type="protein sequence ID" value="AAB46617.1"/>
    <property type="molecule type" value="mRNA"/>
</dbReference>
<dbReference type="EMBL" id="L37606">
    <property type="protein sequence ID" value="AAB41904.1"/>
    <property type="molecule type" value="Genomic_DNA"/>
</dbReference>
<dbReference type="PIR" id="JQ1977">
    <property type="entry name" value="JQ1977"/>
</dbReference>
<dbReference type="SMR" id="Q03460"/>
<dbReference type="UniPathway" id="UPA00045"/>
<dbReference type="UniPathway" id="UPA00634">
    <property type="reaction ID" value="UER00690"/>
</dbReference>
<dbReference type="GO" id="GO:0009501">
    <property type="term" value="C:amyloplast"/>
    <property type="evidence" value="ECO:0007669"/>
    <property type="project" value="UniProtKB-SubCell"/>
</dbReference>
<dbReference type="GO" id="GO:0051538">
    <property type="term" value="F:3 iron, 4 sulfur cluster binding"/>
    <property type="evidence" value="ECO:0007669"/>
    <property type="project" value="UniProtKB-KW"/>
</dbReference>
<dbReference type="GO" id="GO:0050660">
    <property type="term" value="F:flavin adenine dinucleotide binding"/>
    <property type="evidence" value="ECO:0007669"/>
    <property type="project" value="InterPro"/>
</dbReference>
<dbReference type="GO" id="GO:0010181">
    <property type="term" value="F:FMN binding"/>
    <property type="evidence" value="ECO:0007669"/>
    <property type="project" value="InterPro"/>
</dbReference>
<dbReference type="GO" id="GO:0016040">
    <property type="term" value="F:glutamate synthase (NADH) activity"/>
    <property type="evidence" value="ECO:0007669"/>
    <property type="project" value="UniProtKB-EC"/>
</dbReference>
<dbReference type="GO" id="GO:0005506">
    <property type="term" value="F:iron ion binding"/>
    <property type="evidence" value="ECO:0007669"/>
    <property type="project" value="InterPro"/>
</dbReference>
<dbReference type="GO" id="GO:0016639">
    <property type="term" value="F:oxidoreductase activity, acting on the CH-NH2 group of donors, NAD or NADP as acceptor"/>
    <property type="evidence" value="ECO:0007669"/>
    <property type="project" value="InterPro"/>
</dbReference>
<dbReference type="GO" id="GO:0097054">
    <property type="term" value="P:L-glutamate biosynthetic process"/>
    <property type="evidence" value="ECO:0007669"/>
    <property type="project" value="UniProtKB-UniPathway"/>
</dbReference>
<dbReference type="CDD" id="cd00982">
    <property type="entry name" value="gltB_C"/>
    <property type="match status" value="1"/>
</dbReference>
<dbReference type="CDD" id="cd00713">
    <property type="entry name" value="GltS"/>
    <property type="match status" value="1"/>
</dbReference>
<dbReference type="CDD" id="cd02808">
    <property type="entry name" value="GltS_FMN"/>
    <property type="match status" value="1"/>
</dbReference>
<dbReference type="FunFam" id="3.20.20.70:FF:000031">
    <property type="entry name" value="Glutamate synthase 1 [NADH]"/>
    <property type="match status" value="1"/>
</dbReference>
<dbReference type="FunFam" id="1.10.1060.10:FF:000009">
    <property type="entry name" value="Glutamate synthase 1 [NADH] chloroplastic"/>
    <property type="match status" value="1"/>
</dbReference>
<dbReference type="FunFam" id="3.60.20.10:FF:000043">
    <property type="entry name" value="Glutamate synthase 1 [NADH] chloroplastic"/>
    <property type="match status" value="1"/>
</dbReference>
<dbReference type="FunFam" id="3.20.20.70:FF:000017">
    <property type="entry name" value="Glutamate synthase [NADH], amyloplastic"/>
    <property type="match status" value="1"/>
</dbReference>
<dbReference type="FunFam" id="3.40.50.720:FF:000113">
    <property type="entry name" value="Glutamate synthase [NADH], amyloplastic"/>
    <property type="match status" value="1"/>
</dbReference>
<dbReference type="FunFam" id="3.50.50.60:FF:000022">
    <property type="entry name" value="Glutamate synthase [NADH], amyloplastic"/>
    <property type="match status" value="1"/>
</dbReference>
<dbReference type="FunFam" id="2.160.20.60:FF:000001">
    <property type="entry name" value="Glutamate synthase, large subunit"/>
    <property type="match status" value="1"/>
</dbReference>
<dbReference type="Gene3D" id="3.20.20.70">
    <property type="entry name" value="Aldolase class I"/>
    <property type="match status" value="2"/>
</dbReference>
<dbReference type="Gene3D" id="1.10.1060.10">
    <property type="entry name" value="Alpha-helical ferredoxin"/>
    <property type="match status" value="1"/>
</dbReference>
<dbReference type="Gene3D" id="3.50.50.60">
    <property type="entry name" value="FAD/NAD(P)-binding domain"/>
    <property type="match status" value="1"/>
</dbReference>
<dbReference type="Gene3D" id="2.160.20.60">
    <property type="entry name" value="Glutamate synthase, alpha subunit, C-terminal domain"/>
    <property type="match status" value="1"/>
</dbReference>
<dbReference type="Gene3D" id="3.60.20.10">
    <property type="entry name" value="Glutamine Phosphoribosylpyrophosphate, subunit 1, domain 1"/>
    <property type="match status" value="1"/>
</dbReference>
<dbReference type="Gene3D" id="3.40.50.720">
    <property type="entry name" value="NAD(P)-binding Rossmann-like Domain"/>
    <property type="match status" value="1"/>
</dbReference>
<dbReference type="InterPro" id="IPR013785">
    <property type="entry name" value="Aldolase_TIM"/>
</dbReference>
<dbReference type="InterPro" id="IPR028261">
    <property type="entry name" value="DPD_II"/>
</dbReference>
<dbReference type="InterPro" id="IPR036188">
    <property type="entry name" value="FAD/NAD-bd_sf"/>
</dbReference>
<dbReference type="InterPro" id="IPR023753">
    <property type="entry name" value="FAD/NAD-binding_dom"/>
</dbReference>
<dbReference type="InterPro" id="IPR017932">
    <property type="entry name" value="GATase_2_dom"/>
</dbReference>
<dbReference type="InterPro" id="IPR002489">
    <property type="entry name" value="Glu_synth_asu_C"/>
</dbReference>
<dbReference type="InterPro" id="IPR036485">
    <property type="entry name" value="Glu_synth_asu_C_sf"/>
</dbReference>
<dbReference type="InterPro" id="IPR006982">
    <property type="entry name" value="Glu_synth_centr_N"/>
</dbReference>
<dbReference type="InterPro" id="IPR012220">
    <property type="entry name" value="Glu_synth_euk"/>
</dbReference>
<dbReference type="InterPro" id="IPR002932">
    <property type="entry name" value="Glu_synthdom"/>
</dbReference>
<dbReference type="InterPro" id="IPR006005">
    <property type="entry name" value="Glut_synth_ssu1"/>
</dbReference>
<dbReference type="InterPro" id="IPR051394">
    <property type="entry name" value="Glutamate_Synthase"/>
</dbReference>
<dbReference type="InterPro" id="IPR009051">
    <property type="entry name" value="Helical_ferredxn"/>
</dbReference>
<dbReference type="InterPro" id="IPR029055">
    <property type="entry name" value="Ntn_hydrolases_N"/>
</dbReference>
<dbReference type="NCBIfam" id="TIGR01317">
    <property type="entry name" value="GOGAT_sm_gam"/>
    <property type="match status" value="1"/>
</dbReference>
<dbReference type="NCBIfam" id="NF008730">
    <property type="entry name" value="PRK11750.1"/>
    <property type="match status" value="1"/>
</dbReference>
<dbReference type="PANTHER" id="PTHR43100">
    <property type="entry name" value="GLUTAMATE SYNTHASE [NADPH] SMALL CHAIN"/>
    <property type="match status" value="1"/>
</dbReference>
<dbReference type="PANTHER" id="PTHR43100:SF1">
    <property type="entry name" value="GLUTAMATE SYNTHASE [NADPH] SMALL CHAIN"/>
    <property type="match status" value="1"/>
</dbReference>
<dbReference type="Pfam" id="PF14691">
    <property type="entry name" value="Fer4_20"/>
    <property type="match status" value="1"/>
</dbReference>
<dbReference type="Pfam" id="PF00310">
    <property type="entry name" value="GATase_2"/>
    <property type="match status" value="1"/>
</dbReference>
<dbReference type="Pfam" id="PF04898">
    <property type="entry name" value="Glu_syn_central"/>
    <property type="match status" value="1"/>
</dbReference>
<dbReference type="Pfam" id="PF01645">
    <property type="entry name" value="Glu_synthase"/>
    <property type="match status" value="1"/>
</dbReference>
<dbReference type="Pfam" id="PF01493">
    <property type="entry name" value="GXGXG"/>
    <property type="match status" value="1"/>
</dbReference>
<dbReference type="Pfam" id="PF07992">
    <property type="entry name" value="Pyr_redox_2"/>
    <property type="match status" value="1"/>
</dbReference>
<dbReference type="PIRSF" id="PIRSF000187">
    <property type="entry name" value="GOGAT"/>
    <property type="match status" value="1"/>
</dbReference>
<dbReference type="PRINTS" id="PR00419">
    <property type="entry name" value="ADXRDTASE"/>
</dbReference>
<dbReference type="SUPFAM" id="SSF69336">
    <property type="entry name" value="Alpha subunit of glutamate synthase, C-terminal domain"/>
    <property type="match status" value="1"/>
</dbReference>
<dbReference type="SUPFAM" id="SSF46548">
    <property type="entry name" value="alpha-helical ferredoxin"/>
    <property type="match status" value="1"/>
</dbReference>
<dbReference type="SUPFAM" id="SSF51905">
    <property type="entry name" value="FAD/NAD(P)-binding domain"/>
    <property type="match status" value="1"/>
</dbReference>
<dbReference type="SUPFAM" id="SSF51395">
    <property type="entry name" value="FMN-linked oxidoreductases"/>
    <property type="match status" value="1"/>
</dbReference>
<dbReference type="SUPFAM" id="SSF56235">
    <property type="entry name" value="N-terminal nucleophile aminohydrolases (Ntn hydrolases)"/>
    <property type="match status" value="1"/>
</dbReference>
<dbReference type="PROSITE" id="PS51278">
    <property type="entry name" value="GATASE_TYPE_2"/>
    <property type="match status" value="1"/>
</dbReference>